<accession>Q98KP1</accession>
<dbReference type="EC" id="6.3.5.9" evidence="1"/>
<dbReference type="EMBL" id="BA000012">
    <property type="protein sequence ID" value="BAB48773.1"/>
    <property type="molecule type" value="Genomic_DNA"/>
</dbReference>
<dbReference type="RefSeq" id="WP_010910126.1">
    <property type="nucleotide sequence ID" value="NC_002678.2"/>
</dbReference>
<dbReference type="SMR" id="Q98KP1"/>
<dbReference type="KEGG" id="mlo:mlr1387"/>
<dbReference type="PATRIC" id="fig|266835.9.peg.1118"/>
<dbReference type="eggNOG" id="COG1797">
    <property type="taxonomic scope" value="Bacteria"/>
</dbReference>
<dbReference type="HOGENOM" id="CLU_022752_0_0_5"/>
<dbReference type="UniPathway" id="UPA00148">
    <property type="reaction ID" value="UER00220"/>
</dbReference>
<dbReference type="Proteomes" id="UP000000552">
    <property type="component" value="Chromosome"/>
</dbReference>
<dbReference type="GO" id="GO:0005524">
    <property type="term" value="F:ATP binding"/>
    <property type="evidence" value="ECO:0007669"/>
    <property type="project" value="UniProtKB-UniRule"/>
</dbReference>
<dbReference type="GO" id="GO:0042242">
    <property type="term" value="F:cobyrinic acid a,c-diamide synthase activity"/>
    <property type="evidence" value="ECO:0007669"/>
    <property type="project" value="InterPro"/>
</dbReference>
<dbReference type="GO" id="GO:0043802">
    <property type="term" value="F:hydrogenobyrinic acid a,c-diamide synthase (glutamine-hydrolysing) activity"/>
    <property type="evidence" value="ECO:0007669"/>
    <property type="project" value="UniProtKB-UniRule"/>
</dbReference>
<dbReference type="GO" id="GO:0009236">
    <property type="term" value="P:cobalamin biosynthetic process"/>
    <property type="evidence" value="ECO:0007669"/>
    <property type="project" value="UniProtKB-UniRule"/>
</dbReference>
<dbReference type="CDD" id="cd05388">
    <property type="entry name" value="CobB_N"/>
    <property type="match status" value="1"/>
</dbReference>
<dbReference type="Gene3D" id="3.40.50.880">
    <property type="match status" value="1"/>
</dbReference>
<dbReference type="Gene3D" id="3.40.50.300">
    <property type="entry name" value="P-loop containing nucleotide triphosphate hydrolases"/>
    <property type="match status" value="1"/>
</dbReference>
<dbReference type="HAMAP" id="MF_00027">
    <property type="entry name" value="CobB_CbiA"/>
    <property type="match status" value="1"/>
</dbReference>
<dbReference type="InterPro" id="IPR004484">
    <property type="entry name" value="CbiA/CobB_synth"/>
</dbReference>
<dbReference type="InterPro" id="IPR029062">
    <property type="entry name" value="Class_I_gatase-like"/>
</dbReference>
<dbReference type="InterPro" id="IPR002586">
    <property type="entry name" value="CobQ/CobB/MinD/ParA_Nub-bd_dom"/>
</dbReference>
<dbReference type="InterPro" id="IPR011698">
    <property type="entry name" value="GATase_3"/>
</dbReference>
<dbReference type="InterPro" id="IPR027417">
    <property type="entry name" value="P-loop_NTPase"/>
</dbReference>
<dbReference type="NCBIfam" id="TIGR00379">
    <property type="entry name" value="cobB"/>
    <property type="match status" value="1"/>
</dbReference>
<dbReference type="NCBIfam" id="NF002204">
    <property type="entry name" value="PRK01077.1"/>
    <property type="match status" value="1"/>
</dbReference>
<dbReference type="PANTHER" id="PTHR43873">
    <property type="entry name" value="COBYRINATE A,C-DIAMIDE SYNTHASE"/>
    <property type="match status" value="1"/>
</dbReference>
<dbReference type="PANTHER" id="PTHR43873:SF1">
    <property type="entry name" value="COBYRINATE A,C-DIAMIDE SYNTHASE"/>
    <property type="match status" value="1"/>
</dbReference>
<dbReference type="Pfam" id="PF01656">
    <property type="entry name" value="CbiA"/>
    <property type="match status" value="1"/>
</dbReference>
<dbReference type="Pfam" id="PF07685">
    <property type="entry name" value="GATase_3"/>
    <property type="match status" value="1"/>
</dbReference>
<dbReference type="SUPFAM" id="SSF52317">
    <property type="entry name" value="Class I glutamine amidotransferase-like"/>
    <property type="match status" value="1"/>
</dbReference>
<dbReference type="SUPFAM" id="SSF52540">
    <property type="entry name" value="P-loop containing nucleoside triphosphate hydrolases"/>
    <property type="match status" value="1"/>
</dbReference>
<dbReference type="PROSITE" id="PS51274">
    <property type="entry name" value="GATASE_COBBQ"/>
    <property type="match status" value="1"/>
</dbReference>
<sequence length="439" mass="45879">MTARAIIIGAPRSGSGKTSVTIGILRALTRRGLKVRGAKSGPDYIDPGFHTAATGLSGVNLDSWAMPPSLLNALAAQQADDTDFVILESAMGLFDGIPAAPGRTGSAADLARLYGLPVLLVLDVSGQSTTAAAVAKGFATYDPDVRMAGVVLNRLGSERHRKLSGDAIEAIGLPVVGAILRDPTLNLPERHLGLVQAGEYDDLMAHLDRLADMAEKSLDLDAVMRLATPLAPAAGGFADALQPPGQRIALAEDGAFTFLYPHVAAYWRKAGAEIVPFSPLADEAPDDSCDVCWLPGGYPELHAGKLAAAETFKAGMARFAATKPIHGECGGFMVLGEALEDASGETHRMLGLLGHATSFAKRKMNLGYREARLRADCPLGAQGALIRGHEFHYAQMTATGNDEPLADLADGLGNPIGASGYRRGHVSGTFFHAIARASA</sequence>
<organism>
    <name type="scientific">Mesorhizobium japonicum (strain LMG 29417 / CECT 9101 / MAFF 303099)</name>
    <name type="common">Mesorhizobium loti (strain MAFF 303099)</name>
    <dbReference type="NCBI Taxonomy" id="266835"/>
    <lineage>
        <taxon>Bacteria</taxon>
        <taxon>Pseudomonadati</taxon>
        <taxon>Pseudomonadota</taxon>
        <taxon>Alphaproteobacteria</taxon>
        <taxon>Hyphomicrobiales</taxon>
        <taxon>Phyllobacteriaceae</taxon>
        <taxon>Mesorhizobium</taxon>
    </lineage>
</organism>
<reference key="1">
    <citation type="journal article" date="2000" name="DNA Res.">
        <title>Complete genome structure of the nitrogen-fixing symbiotic bacterium Mesorhizobium loti.</title>
        <authorList>
            <person name="Kaneko T."/>
            <person name="Nakamura Y."/>
            <person name="Sato S."/>
            <person name="Asamizu E."/>
            <person name="Kato T."/>
            <person name="Sasamoto S."/>
            <person name="Watanabe A."/>
            <person name="Idesawa K."/>
            <person name="Ishikawa A."/>
            <person name="Kawashima K."/>
            <person name="Kimura T."/>
            <person name="Kishida Y."/>
            <person name="Kiyokawa C."/>
            <person name="Kohara M."/>
            <person name="Matsumoto M."/>
            <person name="Matsuno A."/>
            <person name="Mochizuki Y."/>
            <person name="Nakayama S."/>
            <person name="Nakazaki N."/>
            <person name="Shimpo S."/>
            <person name="Sugimoto M."/>
            <person name="Takeuchi C."/>
            <person name="Yamada M."/>
            <person name="Tabata S."/>
        </authorList>
    </citation>
    <scope>NUCLEOTIDE SEQUENCE [LARGE SCALE GENOMIC DNA]</scope>
    <source>
        <strain>LMG 29417 / CECT 9101 / MAFF 303099</strain>
    </source>
</reference>
<proteinExistence type="inferred from homology"/>
<evidence type="ECO:0000255" key="1">
    <source>
        <dbReference type="HAMAP-Rule" id="MF_00027"/>
    </source>
</evidence>
<gene>
    <name evidence="1" type="primary">cobB</name>
    <name type="ordered locus">mlr1387</name>
</gene>
<name>COBB_RHILO</name>
<feature type="chain" id="PRO_0000141266" description="Hydrogenobyrinate a,c-diamide synthase">
    <location>
        <begin position="1"/>
        <end position="439"/>
    </location>
</feature>
<feature type="domain" description="GATase cobBQ-type" evidence="1">
    <location>
        <begin position="247"/>
        <end position="439"/>
    </location>
</feature>
<feature type="active site" description="Nucleophile" evidence="1">
    <location>
        <position position="329"/>
    </location>
</feature>
<feature type="site" description="Increases nucleophilicity of active site Cys" evidence="1">
    <location>
        <position position="432"/>
    </location>
</feature>
<protein>
    <recommendedName>
        <fullName evidence="1">Hydrogenobyrinate a,c-diamide synthase</fullName>
        <ecNumber evidence="1">6.3.5.9</ecNumber>
    </recommendedName>
    <alternativeName>
        <fullName evidence="1">Hydrogenobyrinic acid a,c-diamide synthase</fullName>
    </alternativeName>
</protein>
<comment type="function">
    <text evidence="1">Catalyzes the ATP-dependent amidation of the two carboxylate groups at positions a and c of hydrogenobyrinate, using either L-glutamine or ammonia as the nitrogen source.</text>
</comment>
<comment type="catalytic activity">
    <reaction evidence="1">
        <text>hydrogenobyrinate + 2 L-glutamine + 2 ATP + 2 H2O = hydrogenobyrinate a,c-diamide + 2 L-glutamate + 2 ADP + 2 phosphate + 2 H(+)</text>
        <dbReference type="Rhea" id="RHEA:12544"/>
        <dbReference type="ChEBI" id="CHEBI:15377"/>
        <dbReference type="ChEBI" id="CHEBI:15378"/>
        <dbReference type="ChEBI" id="CHEBI:29985"/>
        <dbReference type="ChEBI" id="CHEBI:30616"/>
        <dbReference type="ChEBI" id="CHEBI:43474"/>
        <dbReference type="ChEBI" id="CHEBI:58359"/>
        <dbReference type="ChEBI" id="CHEBI:77873"/>
        <dbReference type="ChEBI" id="CHEBI:77874"/>
        <dbReference type="ChEBI" id="CHEBI:456216"/>
        <dbReference type="EC" id="6.3.5.9"/>
    </reaction>
</comment>
<comment type="cofactor">
    <cofactor evidence="1">
        <name>Mg(2+)</name>
        <dbReference type="ChEBI" id="CHEBI:18420"/>
    </cofactor>
</comment>
<comment type="pathway">
    <text evidence="1">Cofactor biosynthesis; adenosylcobalamin biosynthesis; cob(II)yrinate a,c-diamide from precorrin-2 (aerobic route): step 9/10.</text>
</comment>
<comment type="domain">
    <text evidence="1">Comprises of two domains. The C-terminal domain contains the binding site for glutamine and catalyzes the hydrolysis of this substrate to glutamate and ammonia. The N-terminal domain is anticipated to bind ATP and hydrogenobyrinate and catalyzes the ultimate synthesis of the diamide product. The ammonia produced via the glutaminase domain is probably translocated to the adjacent domain via a molecular tunnel, where it reacts with an activated intermediate.</text>
</comment>
<comment type="miscellaneous">
    <text evidence="1">The a and c carboxylates of hydrogenobyrinate are activated for nucleophilic attack via formation of a phosphorylated intermediate by ATP. CobB catalyzes first the amidation of the c-carboxylate, and then that of the a-carboxylate.</text>
</comment>
<comment type="similarity">
    <text evidence="1">Belongs to the CobB/CbiA family.</text>
</comment>
<keyword id="KW-0067">ATP-binding</keyword>
<keyword id="KW-0169">Cobalamin biosynthesis</keyword>
<keyword id="KW-0315">Glutamine amidotransferase</keyword>
<keyword id="KW-0436">Ligase</keyword>
<keyword id="KW-0460">Magnesium</keyword>
<keyword id="KW-0547">Nucleotide-binding</keyword>